<sequence length="32" mass="3753">MEAITYTFILFLTLGLLFFAVAFRETPRITKK</sequence>
<proteinExistence type="inferred from homology"/>
<gene>
    <name evidence="1" type="primary">psbT</name>
    <name type="ordered locus">CYB_0282</name>
</gene>
<protein>
    <recommendedName>
        <fullName evidence="1">Photosystem II reaction center protein T</fullName>
        <shortName evidence="1">PSII-T</shortName>
    </recommendedName>
</protein>
<keyword id="KW-0472">Membrane</keyword>
<keyword id="KW-0602">Photosynthesis</keyword>
<keyword id="KW-0604">Photosystem II</keyword>
<keyword id="KW-1185">Reference proteome</keyword>
<keyword id="KW-0793">Thylakoid</keyword>
<keyword id="KW-0812">Transmembrane</keyword>
<keyword id="KW-1133">Transmembrane helix</keyword>
<reference key="1">
    <citation type="journal article" date="2007" name="ISME J.">
        <title>Population level functional diversity in a microbial community revealed by comparative genomic and metagenomic analyses.</title>
        <authorList>
            <person name="Bhaya D."/>
            <person name="Grossman A.R."/>
            <person name="Steunou A.-S."/>
            <person name="Khuri N."/>
            <person name="Cohan F.M."/>
            <person name="Hamamura N."/>
            <person name="Melendrez M.C."/>
            <person name="Bateson M.M."/>
            <person name="Ward D.M."/>
            <person name="Heidelberg J.F."/>
        </authorList>
    </citation>
    <scope>NUCLEOTIDE SEQUENCE [LARGE SCALE GENOMIC DNA]</scope>
    <source>
        <strain>JA-2-3B'a(2-13)</strain>
    </source>
</reference>
<organism>
    <name type="scientific">Synechococcus sp. (strain JA-2-3B'a(2-13))</name>
    <name type="common">Cyanobacteria bacterium Yellowstone B-Prime</name>
    <dbReference type="NCBI Taxonomy" id="321332"/>
    <lineage>
        <taxon>Bacteria</taxon>
        <taxon>Bacillati</taxon>
        <taxon>Cyanobacteriota</taxon>
        <taxon>Cyanophyceae</taxon>
        <taxon>Synechococcales</taxon>
        <taxon>Synechococcaceae</taxon>
        <taxon>Synechococcus</taxon>
    </lineage>
</organism>
<dbReference type="EMBL" id="CP000240">
    <property type="protein sequence ID" value="ABD01280.1"/>
    <property type="molecule type" value="Genomic_DNA"/>
</dbReference>
<dbReference type="RefSeq" id="WP_011431949.1">
    <property type="nucleotide sequence ID" value="NC_007776.1"/>
</dbReference>
<dbReference type="SMR" id="Q2JPK2"/>
<dbReference type="KEGG" id="cyb:CYB_0282"/>
<dbReference type="eggNOG" id="ENOG5032K16">
    <property type="taxonomic scope" value="Bacteria"/>
</dbReference>
<dbReference type="HOGENOM" id="CLU_217078_1_0_3"/>
<dbReference type="Proteomes" id="UP000001938">
    <property type="component" value="Chromosome"/>
</dbReference>
<dbReference type="GO" id="GO:0009539">
    <property type="term" value="C:photosystem II reaction center"/>
    <property type="evidence" value="ECO:0007669"/>
    <property type="project" value="InterPro"/>
</dbReference>
<dbReference type="GO" id="GO:0031676">
    <property type="term" value="C:plasma membrane-derived thylakoid membrane"/>
    <property type="evidence" value="ECO:0007669"/>
    <property type="project" value="UniProtKB-SubCell"/>
</dbReference>
<dbReference type="GO" id="GO:0015979">
    <property type="term" value="P:photosynthesis"/>
    <property type="evidence" value="ECO:0007669"/>
    <property type="project" value="UniProtKB-UniRule"/>
</dbReference>
<dbReference type="HAMAP" id="MF_00808">
    <property type="entry name" value="PSII_PsbT"/>
    <property type="match status" value="1"/>
</dbReference>
<dbReference type="InterPro" id="IPR001743">
    <property type="entry name" value="PSII_PsbT"/>
</dbReference>
<dbReference type="InterPro" id="IPR037268">
    <property type="entry name" value="PSII_PsbT_sf"/>
</dbReference>
<dbReference type="PANTHER" id="PTHR36411">
    <property type="match status" value="1"/>
</dbReference>
<dbReference type="PANTHER" id="PTHR36411:SF2">
    <property type="entry name" value="PHOTOSYSTEM II REACTION CENTER PROTEIN T"/>
    <property type="match status" value="1"/>
</dbReference>
<dbReference type="Pfam" id="PF01405">
    <property type="entry name" value="PsbT"/>
    <property type="match status" value="1"/>
</dbReference>
<dbReference type="SUPFAM" id="SSF161029">
    <property type="entry name" value="Photosystem II reaction center protein T, PsbT"/>
    <property type="match status" value="1"/>
</dbReference>
<name>PSBT_SYNJB</name>
<feature type="chain" id="PRO_1000047100" description="Photosystem II reaction center protein T">
    <location>
        <begin position="1"/>
        <end position="32"/>
    </location>
</feature>
<feature type="transmembrane region" description="Helical" evidence="1">
    <location>
        <begin position="3"/>
        <end position="23"/>
    </location>
</feature>
<evidence type="ECO:0000255" key="1">
    <source>
        <dbReference type="HAMAP-Rule" id="MF_00808"/>
    </source>
</evidence>
<accession>Q2JPK2</accession>
<comment type="function">
    <text evidence="1">Found at the monomer-monomer interface of the photosystem II (PS II) dimer, plays a role in assembly and dimerization of PSII. PSII is a light-driven water plastoquinone oxidoreductase, using light energy to abstract electrons from H(2)O, generating a proton gradient subsequently used for ATP formation.</text>
</comment>
<comment type="subunit">
    <text evidence="1">PSII is composed of 1 copy each of membrane proteins PsbA, PsbB, PsbC, PsbD, PsbE, PsbF, PsbH, PsbI, PsbJ, PsbK, PsbL, PsbM, PsbT, PsbX, PsbY, PsbZ, Psb30/Ycf12, peripheral proteins PsbO, CyanoQ (PsbQ), PsbU, PsbV and a large number of cofactors. It forms dimeric complexes.</text>
</comment>
<comment type="subcellular location">
    <subcellularLocation>
        <location evidence="1">Cellular thylakoid membrane</location>
        <topology evidence="1">Single-pass membrane protein</topology>
    </subcellularLocation>
</comment>
<comment type="similarity">
    <text evidence="1">Belongs to the PsbT family.</text>
</comment>